<name>YYBB_BACSU</name>
<sequence length="220" mass="25267">MNLRQLSEHVFQCEFELDVPLRIPVHTWFIKDGDDVYIVDTGIERFADAQIRAALAIGNPKAILLTHGHSDHIGGASKWLERFDIPIFAHQKELKYINGEEPYPNKNEVENTGVAHIVQPLTEQTLAHLPLKYYLTPGHSPGHVVYYHKIDRTLLTGDLFITSKEDLHPPIRRFSVDINENIDSGSIIDQIKPTLICSSHGEEILYNEELYKNYVVRYRD</sequence>
<evidence type="ECO:0000250" key="1"/>
<evidence type="ECO:0000305" key="2"/>
<protein>
    <recommendedName>
        <fullName>Probable metallo-hydrolase YybB</fullName>
        <ecNumber>3.-.-.-</ecNumber>
    </recommendedName>
</protein>
<feature type="chain" id="PRO_0000050061" description="Probable metallo-hydrolase YybB">
    <location>
        <begin position="1"/>
        <end position="220"/>
    </location>
</feature>
<feature type="binding site" evidence="1">
    <location>
        <position position="67"/>
    </location>
    <ligand>
        <name>Zn(2+)</name>
        <dbReference type="ChEBI" id="CHEBI:29105"/>
        <label>1</label>
    </ligand>
</feature>
<feature type="binding site" evidence="1">
    <location>
        <position position="69"/>
    </location>
    <ligand>
        <name>Zn(2+)</name>
        <dbReference type="ChEBI" id="CHEBI:29105"/>
        <label>1</label>
    </ligand>
</feature>
<feature type="binding site" evidence="1">
    <location>
        <position position="71"/>
    </location>
    <ligand>
        <name>Zn(2+)</name>
        <dbReference type="ChEBI" id="CHEBI:29105"/>
        <label>2</label>
    </ligand>
</feature>
<feature type="binding site" evidence="1">
    <location>
        <position position="72"/>
    </location>
    <ligand>
        <name>Zn(2+)</name>
        <dbReference type="ChEBI" id="CHEBI:29105"/>
        <label>2</label>
    </ligand>
</feature>
<feature type="binding site" evidence="1">
    <location>
        <position position="139"/>
    </location>
    <ligand>
        <name>Zn(2+)</name>
        <dbReference type="ChEBI" id="CHEBI:29105"/>
        <label>1</label>
    </ligand>
</feature>
<feature type="binding site" evidence="1">
    <location>
        <position position="158"/>
    </location>
    <ligand>
        <name>Zn(2+)</name>
        <dbReference type="ChEBI" id="CHEBI:29105"/>
        <label>1</label>
    </ligand>
</feature>
<feature type="binding site" evidence="1">
    <location>
        <position position="158"/>
    </location>
    <ligand>
        <name>Zn(2+)</name>
        <dbReference type="ChEBI" id="CHEBI:29105"/>
        <label>2</label>
    </ligand>
</feature>
<feature type="binding site" evidence="1">
    <location>
        <position position="200"/>
    </location>
    <ligand>
        <name>Zn(2+)</name>
        <dbReference type="ChEBI" id="CHEBI:29105"/>
        <label>2</label>
    </ligand>
</feature>
<comment type="cofactor">
    <cofactor evidence="1">
        <name>Zn(2+)</name>
        <dbReference type="ChEBI" id="CHEBI:29105"/>
    </cofactor>
    <text evidence="1">Binds 2 Zn(2+) ions per subunit.</text>
</comment>
<comment type="similarity">
    <text evidence="2">Belongs to the metallo-beta-lactamase superfamily.</text>
</comment>
<organism>
    <name type="scientific">Bacillus subtilis (strain 168)</name>
    <dbReference type="NCBI Taxonomy" id="224308"/>
    <lineage>
        <taxon>Bacteria</taxon>
        <taxon>Bacillati</taxon>
        <taxon>Bacillota</taxon>
        <taxon>Bacilli</taxon>
        <taxon>Bacillales</taxon>
        <taxon>Bacillaceae</taxon>
        <taxon>Bacillus</taxon>
    </lineage>
</organism>
<proteinExistence type="inferred from homology"/>
<accession>P37502</accession>
<reference key="1">
    <citation type="journal article" date="1994" name="DNA Res.">
        <title>Systematic sequencing of the 180 kilobase region of the Bacillus subtilis chromosome containing the replication origin.</title>
        <authorList>
            <person name="Ogasawara N."/>
            <person name="Nakai S."/>
            <person name="Yoshikawa H."/>
        </authorList>
    </citation>
    <scope>NUCLEOTIDE SEQUENCE [GENOMIC DNA]</scope>
    <source>
        <strain>168</strain>
    </source>
</reference>
<reference key="2">
    <citation type="journal article" date="1997" name="Nature">
        <title>The complete genome sequence of the Gram-positive bacterium Bacillus subtilis.</title>
        <authorList>
            <person name="Kunst F."/>
            <person name="Ogasawara N."/>
            <person name="Moszer I."/>
            <person name="Albertini A.M."/>
            <person name="Alloni G."/>
            <person name="Azevedo V."/>
            <person name="Bertero M.G."/>
            <person name="Bessieres P."/>
            <person name="Bolotin A."/>
            <person name="Borchert S."/>
            <person name="Borriss R."/>
            <person name="Boursier L."/>
            <person name="Brans A."/>
            <person name="Braun M."/>
            <person name="Brignell S.C."/>
            <person name="Bron S."/>
            <person name="Brouillet S."/>
            <person name="Bruschi C.V."/>
            <person name="Caldwell B."/>
            <person name="Capuano V."/>
            <person name="Carter N.M."/>
            <person name="Choi S.-K."/>
            <person name="Codani J.-J."/>
            <person name="Connerton I.F."/>
            <person name="Cummings N.J."/>
            <person name="Daniel R.A."/>
            <person name="Denizot F."/>
            <person name="Devine K.M."/>
            <person name="Duesterhoeft A."/>
            <person name="Ehrlich S.D."/>
            <person name="Emmerson P.T."/>
            <person name="Entian K.-D."/>
            <person name="Errington J."/>
            <person name="Fabret C."/>
            <person name="Ferrari E."/>
            <person name="Foulger D."/>
            <person name="Fritz C."/>
            <person name="Fujita M."/>
            <person name="Fujita Y."/>
            <person name="Fuma S."/>
            <person name="Galizzi A."/>
            <person name="Galleron N."/>
            <person name="Ghim S.-Y."/>
            <person name="Glaser P."/>
            <person name="Goffeau A."/>
            <person name="Golightly E.J."/>
            <person name="Grandi G."/>
            <person name="Guiseppi G."/>
            <person name="Guy B.J."/>
            <person name="Haga K."/>
            <person name="Haiech J."/>
            <person name="Harwood C.R."/>
            <person name="Henaut A."/>
            <person name="Hilbert H."/>
            <person name="Holsappel S."/>
            <person name="Hosono S."/>
            <person name="Hullo M.-F."/>
            <person name="Itaya M."/>
            <person name="Jones L.-M."/>
            <person name="Joris B."/>
            <person name="Karamata D."/>
            <person name="Kasahara Y."/>
            <person name="Klaerr-Blanchard M."/>
            <person name="Klein C."/>
            <person name="Kobayashi Y."/>
            <person name="Koetter P."/>
            <person name="Koningstein G."/>
            <person name="Krogh S."/>
            <person name="Kumano M."/>
            <person name="Kurita K."/>
            <person name="Lapidus A."/>
            <person name="Lardinois S."/>
            <person name="Lauber J."/>
            <person name="Lazarevic V."/>
            <person name="Lee S.-M."/>
            <person name="Levine A."/>
            <person name="Liu H."/>
            <person name="Masuda S."/>
            <person name="Mauel C."/>
            <person name="Medigue C."/>
            <person name="Medina N."/>
            <person name="Mellado R.P."/>
            <person name="Mizuno M."/>
            <person name="Moestl D."/>
            <person name="Nakai S."/>
            <person name="Noback M."/>
            <person name="Noone D."/>
            <person name="O'Reilly M."/>
            <person name="Ogawa K."/>
            <person name="Ogiwara A."/>
            <person name="Oudega B."/>
            <person name="Park S.-H."/>
            <person name="Parro V."/>
            <person name="Pohl T.M."/>
            <person name="Portetelle D."/>
            <person name="Porwollik S."/>
            <person name="Prescott A.M."/>
            <person name="Presecan E."/>
            <person name="Pujic P."/>
            <person name="Purnelle B."/>
            <person name="Rapoport G."/>
            <person name="Rey M."/>
            <person name="Reynolds S."/>
            <person name="Rieger M."/>
            <person name="Rivolta C."/>
            <person name="Rocha E."/>
            <person name="Roche B."/>
            <person name="Rose M."/>
            <person name="Sadaie Y."/>
            <person name="Sato T."/>
            <person name="Scanlan E."/>
            <person name="Schleich S."/>
            <person name="Schroeter R."/>
            <person name="Scoffone F."/>
            <person name="Sekiguchi J."/>
            <person name="Sekowska A."/>
            <person name="Seror S.J."/>
            <person name="Serror P."/>
            <person name="Shin B.-S."/>
            <person name="Soldo B."/>
            <person name="Sorokin A."/>
            <person name="Tacconi E."/>
            <person name="Takagi T."/>
            <person name="Takahashi H."/>
            <person name="Takemaru K."/>
            <person name="Takeuchi M."/>
            <person name="Tamakoshi A."/>
            <person name="Tanaka T."/>
            <person name="Terpstra P."/>
            <person name="Tognoni A."/>
            <person name="Tosato V."/>
            <person name="Uchiyama S."/>
            <person name="Vandenbol M."/>
            <person name="Vannier F."/>
            <person name="Vassarotti A."/>
            <person name="Viari A."/>
            <person name="Wambutt R."/>
            <person name="Wedler E."/>
            <person name="Wedler H."/>
            <person name="Weitzenegger T."/>
            <person name="Winters P."/>
            <person name="Wipat A."/>
            <person name="Yamamoto H."/>
            <person name="Yamane K."/>
            <person name="Yasumoto K."/>
            <person name="Yata K."/>
            <person name="Yoshida K."/>
            <person name="Yoshikawa H.-F."/>
            <person name="Zumstein E."/>
            <person name="Yoshikawa H."/>
            <person name="Danchin A."/>
        </authorList>
    </citation>
    <scope>NUCLEOTIDE SEQUENCE [LARGE SCALE GENOMIC DNA]</scope>
    <source>
        <strain>168</strain>
    </source>
</reference>
<gene>
    <name type="primary">yybB</name>
    <name type="ordered locus">BSU40700</name>
</gene>
<dbReference type="EC" id="3.-.-.-"/>
<dbReference type="EMBL" id="D26185">
    <property type="protein sequence ID" value="BAA05201.1"/>
    <property type="molecule type" value="Genomic_DNA"/>
</dbReference>
<dbReference type="EMBL" id="AL009126">
    <property type="protein sequence ID" value="CAB16107.1"/>
    <property type="molecule type" value="Genomic_DNA"/>
</dbReference>
<dbReference type="PIR" id="S65995">
    <property type="entry name" value="S65995"/>
</dbReference>
<dbReference type="RefSeq" id="NP_391950.1">
    <property type="nucleotide sequence ID" value="NC_000964.3"/>
</dbReference>
<dbReference type="RefSeq" id="WP_003226877.1">
    <property type="nucleotide sequence ID" value="NZ_OZ025638.1"/>
</dbReference>
<dbReference type="SMR" id="P37502"/>
<dbReference type="FunCoup" id="P37502">
    <property type="interactions" value="153"/>
</dbReference>
<dbReference type="STRING" id="224308.BSU40700"/>
<dbReference type="PaxDb" id="224308-BSU40700"/>
<dbReference type="EnsemblBacteria" id="CAB16107">
    <property type="protein sequence ID" value="CAB16107"/>
    <property type="gene ID" value="BSU_40700"/>
</dbReference>
<dbReference type="GeneID" id="937880"/>
<dbReference type="KEGG" id="bsu:BSU40700"/>
<dbReference type="PATRIC" id="fig|224308.179.peg.4412"/>
<dbReference type="eggNOG" id="COG0491">
    <property type="taxonomic scope" value="Bacteria"/>
</dbReference>
<dbReference type="InParanoid" id="P37502"/>
<dbReference type="OrthoDB" id="9802248at2"/>
<dbReference type="PhylomeDB" id="P37502"/>
<dbReference type="BioCyc" id="BSUB:BSU40700-MONOMER"/>
<dbReference type="Proteomes" id="UP000001570">
    <property type="component" value="Chromosome"/>
</dbReference>
<dbReference type="GO" id="GO:0016787">
    <property type="term" value="F:hydrolase activity"/>
    <property type="evidence" value="ECO:0007669"/>
    <property type="project" value="UniProtKB-KW"/>
</dbReference>
<dbReference type="GO" id="GO:0046872">
    <property type="term" value="F:metal ion binding"/>
    <property type="evidence" value="ECO:0007669"/>
    <property type="project" value="UniProtKB-KW"/>
</dbReference>
<dbReference type="CDD" id="cd07721">
    <property type="entry name" value="yflN-like_MBL-fold"/>
    <property type="match status" value="1"/>
</dbReference>
<dbReference type="Gene3D" id="3.60.15.10">
    <property type="entry name" value="Ribonuclease Z/Hydroxyacylglutathione hydrolase-like"/>
    <property type="match status" value="1"/>
</dbReference>
<dbReference type="InterPro" id="IPR001279">
    <property type="entry name" value="Metallo-B-lactamas"/>
</dbReference>
<dbReference type="InterPro" id="IPR050855">
    <property type="entry name" value="NDM-1-like"/>
</dbReference>
<dbReference type="InterPro" id="IPR036866">
    <property type="entry name" value="RibonucZ/Hydroxyglut_hydro"/>
</dbReference>
<dbReference type="PANTHER" id="PTHR42951">
    <property type="entry name" value="METALLO-BETA-LACTAMASE DOMAIN-CONTAINING"/>
    <property type="match status" value="1"/>
</dbReference>
<dbReference type="PANTHER" id="PTHR42951:SF17">
    <property type="entry name" value="METALLO-BETA-LACTAMASE DOMAIN-CONTAINING PROTEIN"/>
    <property type="match status" value="1"/>
</dbReference>
<dbReference type="Pfam" id="PF00753">
    <property type="entry name" value="Lactamase_B"/>
    <property type="match status" value="1"/>
</dbReference>
<dbReference type="SMART" id="SM00849">
    <property type="entry name" value="Lactamase_B"/>
    <property type="match status" value="1"/>
</dbReference>
<dbReference type="SUPFAM" id="SSF56281">
    <property type="entry name" value="Metallo-hydrolase/oxidoreductase"/>
    <property type="match status" value="1"/>
</dbReference>
<keyword id="KW-0378">Hydrolase</keyword>
<keyword id="KW-0479">Metal-binding</keyword>
<keyword id="KW-1185">Reference proteome</keyword>
<keyword id="KW-0862">Zinc</keyword>